<protein>
    <recommendedName>
        <fullName>Putative electron transfer flavoprotein subunit YgcR</fullName>
    </recommendedName>
</protein>
<comment type="function">
    <text>May play a role in a redox process.</text>
</comment>
<comment type="subunit">
    <text evidence="2">YgcQ and YgcR form a heterodimer.</text>
</comment>
<comment type="disruption phenotype">
    <text evidence="1">Cells undergo an apoptotic-like death upon DNA damage characterized by membrane depolarization.</text>
</comment>
<comment type="similarity">
    <text evidence="2">Belongs to the ETF beta-subunit/FixA family.</text>
</comment>
<comment type="sequence caution" evidence="2">
    <conflict type="frameshift">
        <sequence resource="EMBL-CDS" id="AAA69280"/>
    </conflict>
</comment>
<sequence>MNILLAFKAEPDAGMLAEKEWQAAAQGKSGPDISLLRSLLGADEQAAAALLLAQRKNGTPMSLTALSMGDERALHWLRYLMALGFEEAVLLETAADLRFAPEFVARHIAEWQHQNPLDLIITGCQSSEGQNGQTPFLLAEMLGWPCFTQVERFTLDALFITLEQRTEHGLRCCRVRLPAVIAVRQCGEVALPVPGMRQRMAAGKAEIIRKTVAAEMPAMQCLQLARAEQRRGATLIDGQTVAEKAQKLWQDYLRQRMQP</sequence>
<gene>
    <name type="primary">ygcR</name>
    <name type="ordered locus">b2770</name>
    <name type="ordered locus">JW5441</name>
</gene>
<feature type="chain" id="PRO_0000167900" description="Putative electron transfer flavoprotein subunit YgcR">
    <location>
        <begin position="1"/>
        <end position="259"/>
    </location>
</feature>
<dbReference type="EMBL" id="U29579">
    <property type="protein sequence ID" value="AAA69280.1"/>
    <property type="status" value="ALT_FRAME"/>
    <property type="molecule type" value="Genomic_DNA"/>
</dbReference>
<dbReference type="EMBL" id="U00096">
    <property type="protein sequence ID" value="AAC75812.2"/>
    <property type="molecule type" value="Genomic_DNA"/>
</dbReference>
<dbReference type="EMBL" id="AP009048">
    <property type="protein sequence ID" value="BAE76847.1"/>
    <property type="molecule type" value="Genomic_DNA"/>
</dbReference>
<dbReference type="PIR" id="F65058">
    <property type="entry name" value="F65058"/>
</dbReference>
<dbReference type="RefSeq" id="NP_417250.4">
    <property type="nucleotide sequence ID" value="NC_000913.3"/>
</dbReference>
<dbReference type="RefSeq" id="WP_001299652.1">
    <property type="nucleotide sequence ID" value="NZ_LN832404.1"/>
</dbReference>
<dbReference type="SMR" id="Q46908"/>
<dbReference type="BioGRID" id="4262284">
    <property type="interactions" value="19"/>
</dbReference>
<dbReference type="BioGRID" id="851570">
    <property type="interactions" value="2"/>
</dbReference>
<dbReference type="FunCoup" id="Q46908">
    <property type="interactions" value="119"/>
</dbReference>
<dbReference type="IntAct" id="Q46908">
    <property type="interactions" value="2"/>
</dbReference>
<dbReference type="STRING" id="511145.b2770"/>
<dbReference type="PaxDb" id="511145-b2770"/>
<dbReference type="EnsemblBacteria" id="AAC75812">
    <property type="protein sequence ID" value="AAC75812"/>
    <property type="gene ID" value="b2770"/>
</dbReference>
<dbReference type="GeneID" id="947240"/>
<dbReference type="KEGG" id="ecj:JW5441"/>
<dbReference type="KEGG" id="eco:b2770"/>
<dbReference type="KEGG" id="ecoc:C3026_15220"/>
<dbReference type="PATRIC" id="fig|1411691.4.peg.3967"/>
<dbReference type="EchoBASE" id="EB2926"/>
<dbReference type="eggNOG" id="COG2086">
    <property type="taxonomic scope" value="Bacteria"/>
</dbReference>
<dbReference type="HOGENOM" id="CLU_087555_1_0_6"/>
<dbReference type="InParanoid" id="Q46908"/>
<dbReference type="OMA" id="QEVRMNI"/>
<dbReference type="OrthoDB" id="5598152at2"/>
<dbReference type="PhylomeDB" id="Q46908"/>
<dbReference type="BioCyc" id="EcoCyc:G7436-MONOMER"/>
<dbReference type="PRO" id="PR:Q46908"/>
<dbReference type="Proteomes" id="UP000000625">
    <property type="component" value="Chromosome"/>
</dbReference>
<dbReference type="GO" id="GO:0009055">
    <property type="term" value="F:electron transfer activity"/>
    <property type="evidence" value="ECO:0000318"/>
    <property type="project" value="GO_Central"/>
</dbReference>
<dbReference type="Gene3D" id="3.40.50.620">
    <property type="entry name" value="HUPs"/>
    <property type="match status" value="1"/>
</dbReference>
<dbReference type="InterPro" id="IPR014730">
    <property type="entry name" value="ETF_a/b_N"/>
</dbReference>
<dbReference type="InterPro" id="IPR012255">
    <property type="entry name" value="ETF_b"/>
</dbReference>
<dbReference type="InterPro" id="IPR014729">
    <property type="entry name" value="Rossmann-like_a/b/a_fold"/>
</dbReference>
<dbReference type="PANTHER" id="PTHR21294">
    <property type="entry name" value="ELECTRON TRANSFER FLAVOPROTEIN BETA-SUBUNIT"/>
    <property type="match status" value="1"/>
</dbReference>
<dbReference type="PANTHER" id="PTHR21294:SF8">
    <property type="entry name" value="ELECTRON TRANSFER FLAVOPROTEIN SUBUNIT BETA"/>
    <property type="match status" value="1"/>
</dbReference>
<dbReference type="Pfam" id="PF01012">
    <property type="entry name" value="ETF"/>
    <property type="match status" value="1"/>
</dbReference>
<dbReference type="PIRSF" id="PIRSF000090">
    <property type="entry name" value="Beta-ETF"/>
    <property type="match status" value="1"/>
</dbReference>
<dbReference type="SMART" id="SM00893">
    <property type="entry name" value="ETF"/>
    <property type="match status" value="1"/>
</dbReference>
<dbReference type="SUPFAM" id="SSF52402">
    <property type="entry name" value="Adenine nucleotide alpha hydrolases-like"/>
    <property type="match status" value="1"/>
</dbReference>
<reference key="1">
    <citation type="journal article" date="1997" name="Science">
        <title>The complete genome sequence of Escherichia coli K-12.</title>
        <authorList>
            <person name="Blattner F.R."/>
            <person name="Plunkett G. III"/>
            <person name="Bloch C.A."/>
            <person name="Perna N.T."/>
            <person name="Burland V."/>
            <person name="Riley M."/>
            <person name="Collado-Vides J."/>
            <person name="Glasner J.D."/>
            <person name="Rode C.K."/>
            <person name="Mayhew G.F."/>
            <person name="Gregor J."/>
            <person name="Davis N.W."/>
            <person name="Kirkpatrick H.A."/>
            <person name="Goeden M.A."/>
            <person name="Rose D.J."/>
            <person name="Mau B."/>
            <person name="Shao Y."/>
        </authorList>
    </citation>
    <scope>NUCLEOTIDE SEQUENCE [LARGE SCALE GENOMIC DNA]</scope>
    <source>
        <strain>K12 / MG1655 / ATCC 47076</strain>
    </source>
</reference>
<reference key="2">
    <citation type="journal article" date="2006" name="Mol. Syst. Biol.">
        <title>Highly accurate genome sequences of Escherichia coli K-12 strains MG1655 and W3110.</title>
        <authorList>
            <person name="Hayashi K."/>
            <person name="Morooka N."/>
            <person name="Yamamoto Y."/>
            <person name="Fujita K."/>
            <person name="Isono K."/>
            <person name="Choi S."/>
            <person name="Ohtsubo E."/>
            <person name="Baba T."/>
            <person name="Wanner B.L."/>
            <person name="Mori H."/>
            <person name="Horiuchi T."/>
        </authorList>
    </citation>
    <scope>NUCLEOTIDE SEQUENCE [LARGE SCALE GENOMIC DNA]</scope>
    <source>
        <strain>K12 / W3110 / ATCC 27325 / DSM 5911</strain>
    </source>
</reference>
<reference key="3">
    <citation type="journal article" date="2012" name="PLoS Biol.">
        <title>Two programmed cell death systems in Escherichia coli: an apoptotic-like death is inhibited by the mazEF-mediated death pathway.</title>
        <authorList>
            <person name="Erental A."/>
            <person name="Sharon I."/>
            <person name="Engelberg-Kulka H."/>
        </authorList>
    </citation>
    <scope>DISRUPTION PHENOTYPE</scope>
    <source>
        <strain>K12 / MC4100 / ATCC 35695 / DSM 6574</strain>
    </source>
</reference>
<keyword id="KW-0249">Electron transport</keyword>
<keyword id="KW-0274">FAD</keyword>
<keyword id="KW-0285">Flavoprotein</keyword>
<keyword id="KW-1185">Reference proteome</keyword>
<keyword id="KW-0813">Transport</keyword>
<evidence type="ECO:0000269" key="1">
    <source>
    </source>
</evidence>
<evidence type="ECO:0000305" key="2"/>
<name>YGCR_ECOLI</name>
<proteinExistence type="inferred from homology"/>
<organism>
    <name type="scientific">Escherichia coli (strain K12)</name>
    <dbReference type="NCBI Taxonomy" id="83333"/>
    <lineage>
        <taxon>Bacteria</taxon>
        <taxon>Pseudomonadati</taxon>
        <taxon>Pseudomonadota</taxon>
        <taxon>Gammaproteobacteria</taxon>
        <taxon>Enterobacterales</taxon>
        <taxon>Enterobacteriaceae</taxon>
        <taxon>Escherichia</taxon>
    </lineage>
</organism>
<accession>Q46908</accession>
<accession>Q2MA59</accession>